<keyword id="KW-0238">DNA-binding</keyword>
<keyword id="KW-0423">Lactose metabolism</keyword>
<keyword id="KW-1185">Reference proteome</keyword>
<keyword id="KW-0678">Repressor</keyword>
<keyword id="KW-0804">Transcription</keyword>
<keyword id="KW-0805">Transcription regulation</keyword>
<accession>P26422</accession>
<gene>
    <name type="primary">lacR</name>
    <name type="ordered locus">SMU_1498</name>
</gene>
<sequence length="251" mass="28704">MRKEERLEEITKLINKRGTIRVTEVVERLKVSDMTVRRDLTELEGLGVLTRIHGGARSNNIFQYKEMSHEEKHSRQIEEKHYIAQKAAELVEEGDTIFLGPGTTVELLAEEINKTTLQVITNCLPVFQILSQKQSETFRVHLLGGEMRSITQSFIGEITNIVLEKMHFSKMFFSGNGVKGNEVMTSSFQEAYTQKMALGRAIEKYLLIDSSKIGKEDFTSFYQLSQLTALITDCQDDDKLQKLSKYTEIIN</sequence>
<proteinExistence type="predicted"/>
<feature type="chain" id="PRO_0000050266" description="Lactose phosphotransferase system repressor">
    <location>
        <begin position="1"/>
        <end position="251"/>
    </location>
</feature>
<feature type="domain" description="HTH deoR-type" evidence="1">
    <location>
        <begin position="3"/>
        <end position="58"/>
    </location>
</feature>
<feature type="DNA-binding region" description="H-T-H motif" evidence="1">
    <location>
        <begin position="20"/>
        <end position="39"/>
    </location>
</feature>
<feature type="sequence conflict" description="In Ref. 1; AAA26903." evidence="2" ref="1">
    <original>R</original>
    <variation>K</variation>
    <location>
        <position position="2"/>
    </location>
</feature>
<feature type="sequence conflict" description="In Ref. 1; AAA26903." evidence="2" ref="1">
    <original>L</original>
    <variation>F</variation>
    <location>
        <position position="206"/>
    </location>
</feature>
<name>LACR_STRMU</name>
<dbReference type="EMBL" id="M80797">
    <property type="protein sequence ID" value="AAA26903.1"/>
    <property type="molecule type" value="Genomic_DNA"/>
</dbReference>
<dbReference type="EMBL" id="AE014133">
    <property type="protein sequence ID" value="AAN59151.1"/>
    <property type="molecule type" value="Genomic_DNA"/>
</dbReference>
<dbReference type="PIR" id="B43258">
    <property type="entry name" value="B43258"/>
</dbReference>
<dbReference type="RefSeq" id="NP_721845.1">
    <property type="nucleotide sequence ID" value="NC_004350.2"/>
</dbReference>
<dbReference type="RefSeq" id="WP_002262461.1">
    <property type="nucleotide sequence ID" value="NC_004350.2"/>
</dbReference>
<dbReference type="SMR" id="P26422"/>
<dbReference type="STRING" id="210007.SMU_1498"/>
<dbReference type="KEGG" id="smu:SMU_1498"/>
<dbReference type="PATRIC" id="fig|210007.7.peg.1333"/>
<dbReference type="eggNOG" id="COG1349">
    <property type="taxonomic scope" value="Bacteria"/>
</dbReference>
<dbReference type="HOGENOM" id="CLU_060699_1_0_9"/>
<dbReference type="OrthoDB" id="9798651at2"/>
<dbReference type="PhylomeDB" id="P26422"/>
<dbReference type="Proteomes" id="UP000002512">
    <property type="component" value="Chromosome"/>
</dbReference>
<dbReference type="GO" id="GO:0003677">
    <property type="term" value="F:DNA binding"/>
    <property type="evidence" value="ECO:0007669"/>
    <property type="project" value="UniProtKB-KW"/>
</dbReference>
<dbReference type="GO" id="GO:0003700">
    <property type="term" value="F:DNA-binding transcription factor activity"/>
    <property type="evidence" value="ECO:0007669"/>
    <property type="project" value="InterPro"/>
</dbReference>
<dbReference type="GO" id="GO:0005988">
    <property type="term" value="P:lactose metabolic process"/>
    <property type="evidence" value="ECO:0007669"/>
    <property type="project" value="UniProtKB-KW"/>
</dbReference>
<dbReference type="Gene3D" id="3.40.50.1360">
    <property type="match status" value="1"/>
</dbReference>
<dbReference type="Gene3D" id="1.10.10.10">
    <property type="entry name" value="Winged helix-like DNA-binding domain superfamily/Winged helix DNA-binding domain"/>
    <property type="match status" value="1"/>
</dbReference>
<dbReference type="InterPro" id="IPR050313">
    <property type="entry name" value="Carb_Metab_HTH_regulators"/>
</dbReference>
<dbReference type="InterPro" id="IPR014036">
    <property type="entry name" value="DeoR-like_C"/>
</dbReference>
<dbReference type="InterPro" id="IPR001034">
    <property type="entry name" value="DeoR_HTH"/>
</dbReference>
<dbReference type="InterPro" id="IPR037171">
    <property type="entry name" value="NagB/RpiA_transferase-like"/>
</dbReference>
<dbReference type="InterPro" id="IPR018356">
    <property type="entry name" value="Tscrpt_reg_HTH_DeoR_CS"/>
</dbReference>
<dbReference type="InterPro" id="IPR036388">
    <property type="entry name" value="WH-like_DNA-bd_sf"/>
</dbReference>
<dbReference type="InterPro" id="IPR036390">
    <property type="entry name" value="WH_DNA-bd_sf"/>
</dbReference>
<dbReference type="PANTHER" id="PTHR30363:SF4">
    <property type="entry name" value="GLYCEROL-3-PHOSPHATE REGULON REPRESSOR"/>
    <property type="match status" value="1"/>
</dbReference>
<dbReference type="PANTHER" id="PTHR30363">
    <property type="entry name" value="HTH-TYPE TRANSCRIPTIONAL REGULATOR SRLR-RELATED"/>
    <property type="match status" value="1"/>
</dbReference>
<dbReference type="Pfam" id="PF00455">
    <property type="entry name" value="DeoRC"/>
    <property type="match status" value="1"/>
</dbReference>
<dbReference type="Pfam" id="PF08220">
    <property type="entry name" value="HTH_DeoR"/>
    <property type="match status" value="1"/>
</dbReference>
<dbReference type="PRINTS" id="PR00037">
    <property type="entry name" value="HTHLACR"/>
</dbReference>
<dbReference type="SMART" id="SM01134">
    <property type="entry name" value="DeoRC"/>
    <property type="match status" value="1"/>
</dbReference>
<dbReference type="SMART" id="SM00420">
    <property type="entry name" value="HTH_DEOR"/>
    <property type="match status" value="1"/>
</dbReference>
<dbReference type="SUPFAM" id="SSF100950">
    <property type="entry name" value="NagB/RpiA/CoA transferase-like"/>
    <property type="match status" value="1"/>
</dbReference>
<dbReference type="SUPFAM" id="SSF46785">
    <property type="entry name" value="Winged helix' DNA-binding domain"/>
    <property type="match status" value="1"/>
</dbReference>
<dbReference type="PROSITE" id="PS00894">
    <property type="entry name" value="HTH_DEOR_1"/>
    <property type="match status" value="1"/>
</dbReference>
<dbReference type="PROSITE" id="PS51000">
    <property type="entry name" value="HTH_DEOR_2"/>
    <property type="match status" value="1"/>
</dbReference>
<protein>
    <recommendedName>
        <fullName>Lactose phosphotransferase system repressor</fullName>
    </recommendedName>
</protein>
<organism>
    <name type="scientific">Streptococcus mutans serotype c (strain ATCC 700610 / UA159)</name>
    <dbReference type="NCBI Taxonomy" id="210007"/>
    <lineage>
        <taxon>Bacteria</taxon>
        <taxon>Bacillati</taxon>
        <taxon>Bacillota</taxon>
        <taxon>Bacilli</taxon>
        <taxon>Lactobacillales</taxon>
        <taxon>Streptococcaceae</taxon>
        <taxon>Streptococcus</taxon>
    </lineage>
</organism>
<evidence type="ECO:0000255" key="1">
    <source>
        <dbReference type="PROSITE-ProRule" id="PRU00349"/>
    </source>
</evidence>
<evidence type="ECO:0000305" key="2"/>
<comment type="function">
    <text>Repressor of the lactose catabolism operon. Galactose-6-phosphate is the inducer.</text>
</comment>
<reference key="1">
    <citation type="journal article" date="1992" name="J. Bacteriol.">
        <title>Nucleotide and deduced amino acid sequences of the lacR, lacABCD, and lacFE genes encoding the repressor, tagatose 6-phosphate gene cluster, and sugar-specific phosphotransferase system components of the lactose operon of Streptococcus mutans.</title>
        <authorList>
            <person name="Rosey E.L."/>
            <person name="Stewart G.C."/>
        </authorList>
    </citation>
    <scope>NUCLEOTIDE SEQUENCE [GENOMIC DNA]</scope>
</reference>
<reference key="2">
    <citation type="journal article" date="2002" name="Proc. Natl. Acad. Sci. U.S.A.">
        <title>Genome sequence of Streptococcus mutans UA159, a cariogenic dental pathogen.</title>
        <authorList>
            <person name="Ajdic D.J."/>
            <person name="McShan W.M."/>
            <person name="McLaughlin R.E."/>
            <person name="Savic G."/>
            <person name="Chang J."/>
            <person name="Carson M.B."/>
            <person name="Primeaux C."/>
            <person name="Tian R."/>
            <person name="Kenton S."/>
            <person name="Jia H.G."/>
            <person name="Lin S.P."/>
            <person name="Qian Y."/>
            <person name="Li S."/>
            <person name="Zhu H."/>
            <person name="Najar F.Z."/>
            <person name="Lai H."/>
            <person name="White J."/>
            <person name="Roe B.A."/>
            <person name="Ferretti J.J."/>
        </authorList>
    </citation>
    <scope>NUCLEOTIDE SEQUENCE [LARGE SCALE GENOMIC DNA]</scope>
    <source>
        <strain>ATCC 700610 / UA159</strain>
    </source>
</reference>